<protein>
    <recommendedName>
        <fullName evidence="1">Glycogen synthase</fullName>
        <ecNumber evidence="1">2.4.1.21</ecNumber>
    </recommendedName>
    <alternativeName>
        <fullName evidence="1">Starch [bacterial glycogen] synthase</fullName>
    </alternativeName>
</protein>
<feature type="chain" id="PRO_0000230259" description="Glycogen synthase">
    <location>
        <begin position="1"/>
        <end position="485"/>
    </location>
</feature>
<feature type="binding site" evidence="1">
    <location>
        <position position="21"/>
    </location>
    <ligand>
        <name>ADP-alpha-D-glucose</name>
        <dbReference type="ChEBI" id="CHEBI:57498"/>
    </ligand>
</feature>
<name>GLGA_PSEU2</name>
<dbReference type="EC" id="2.4.1.21" evidence="1"/>
<dbReference type="EMBL" id="CP000075">
    <property type="protein sequence ID" value="AAY38026.1"/>
    <property type="status" value="ALT_INIT"/>
    <property type="molecule type" value="Genomic_DNA"/>
</dbReference>
<dbReference type="RefSeq" id="YP_236064.1">
    <property type="nucleotide sequence ID" value="NC_007005.1"/>
</dbReference>
<dbReference type="SMR" id="Q4ZS46"/>
<dbReference type="STRING" id="205918.Psyr_2992"/>
<dbReference type="CAZy" id="GT5">
    <property type="family name" value="Glycosyltransferase Family 5"/>
</dbReference>
<dbReference type="KEGG" id="psb:Psyr_2992"/>
<dbReference type="PATRIC" id="fig|205918.7.peg.3053"/>
<dbReference type="eggNOG" id="COG0297">
    <property type="taxonomic scope" value="Bacteria"/>
</dbReference>
<dbReference type="HOGENOM" id="CLU_009583_18_4_6"/>
<dbReference type="OrthoDB" id="9808590at2"/>
<dbReference type="UniPathway" id="UPA00164"/>
<dbReference type="Proteomes" id="UP000000426">
    <property type="component" value="Chromosome"/>
</dbReference>
<dbReference type="GO" id="GO:0009011">
    <property type="term" value="F:alpha-1,4-glucan glucosyltransferase (ADP-glucose donor) activity"/>
    <property type="evidence" value="ECO:0007669"/>
    <property type="project" value="UniProtKB-UniRule"/>
</dbReference>
<dbReference type="GO" id="GO:0004373">
    <property type="term" value="F:alpha-1,4-glucan glucosyltransferase (UDP-glucose donor) activity"/>
    <property type="evidence" value="ECO:0007669"/>
    <property type="project" value="InterPro"/>
</dbReference>
<dbReference type="GO" id="GO:0005978">
    <property type="term" value="P:glycogen biosynthetic process"/>
    <property type="evidence" value="ECO:0007669"/>
    <property type="project" value="UniProtKB-UniRule"/>
</dbReference>
<dbReference type="CDD" id="cd03791">
    <property type="entry name" value="GT5_Glycogen_synthase_DULL1-like"/>
    <property type="match status" value="1"/>
</dbReference>
<dbReference type="Gene3D" id="3.40.50.2000">
    <property type="entry name" value="Glycogen Phosphorylase B"/>
    <property type="match status" value="2"/>
</dbReference>
<dbReference type="HAMAP" id="MF_00484">
    <property type="entry name" value="Glycogen_synth"/>
    <property type="match status" value="1"/>
</dbReference>
<dbReference type="InterPro" id="IPR001296">
    <property type="entry name" value="Glyco_trans_1"/>
</dbReference>
<dbReference type="InterPro" id="IPR011835">
    <property type="entry name" value="GS/SS"/>
</dbReference>
<dbReference type="InterPro" id="IPR013534">
    <property type="entry name" value="Starch_synth_cat_dom"/>
</dbReference>
<dbReference type="NCBIfam" id="TIGR02095">
    <property type="entry name" value="glgA"/>
    <property type="match status" value="1"/>
</dbReference>
<dbReference type="NCBIfam" id="NF001899">
    <property type="entry name" value="PRK00654.1-2"/>
    <property type="match status" value="1"/>
</dbReference>
<dbReference type="NCBIfam" id="NF001901">
    <property type="entry name" value="PRK00654.1-5"/>
    <property type="match status" value="1"/>
</dbReference>
<dbReference type="PANTHER" id="PTHR45825:SF8">
    <property type="entry name" value="GLYCOGEN SYNTHASE"/>
    <property type="match status" value="1"/>
</dbReference>
<dbReference type="PANTHER" id="PTHR45825">
    <property type="entry name" value="GRANULE-BOUND STARCH SYNTHASE 1, CHLOROPLASTIC/AMYLOPLASTIC"/>
    <property type="match status" value="1"/>
</dbReference>
<dbReference type="Pfam" id="PF08323">
    <property type="entry name" value="Glyco_transf_5"/>
    <property type="match status" value="1"/>
</dbReference>
<dbReference type="Pfam" id="PF00534">
    <property type="entry name" value="Glycos_transf_1"/>
    <property type="match status" value="1"/>
</dbReference>
<dbReference type="SUPFAM" id="SSF53756">
    <property type="entry name" value="UDP-Glycosyltransferase/glycogen phosphorylase"/>
    <property type="match status" value="1"/>
</dbReference>
<accession>Q4ZS46</accession>
<proteinExistence type="inferred from homology"/>
<keyword id="KW-0320">Glycogen biosynthesis</keyword>
<keyword id="KW-0328">Glycosyltransferase</keyword>
<keyword id="KW-0808">Transferase</keyword>
<gene>
    <name evidence="1" type="primary">glgA</name>
    <name type="ordered locus">Psyr_2992</name>
</gene>
<organism>
    <name type="scientific">Pseudomonas syringae pv. syringae (strain B728a)</name>
    <dbReference type="NCBI Taxonomy" id="205918"/>
    <lineage>
        <taxon>Bacteria</taxon>
        <taxon>Pseudomonadati</taxon>
        <taxon>Pseudomonadota</taxon>
        <taxon>Gammaproteobacteria</taxon>
        <taxon>Pseudomonadales</taxon>
        <taxon>Pseudomonadaceae</taxon>
        <taxon>Pseudomonas</taxon>
        <taxon>Pseudomonas syringae</taxon>
    </lineage>
</organism>
<sequence>MSQVNRRKVLFVTSELADLVKTGGLGDVSAALPRAMRHLHDVRVLIPGYPQVINSGNPIHIISQLGGHAALPPCKVGRMDMKDGLVIYVLICPELYEREGTPYADSNGRDWSDNHIRFARLGLAAAEFAAGEVKSQWCPELVHAHDWPAGLAPAYMRWRGQSTPSIFTVHNLAYQGTVSTASSRELGIPDSAITPEGMEFYGQLSFIKAGMAFASHITTVSATYAREITTPEFGCGLEGFLQSKANKGQLSGIPNGIDESWDAATDEHLICHFAPNEWTRKEINADYVRELFELDASTGPLFAVVSRLVYQKGLDLTIGVAEHIVNNGGQIAIIGRGEPEEEEAMRELAARFPGRVGVRIGFNETDARRMFAGSDFLLMPSRYEPCGLSQMYAQRFGSLPVARNTGGLADTIEDGVTGFLFNESTVESYTQALDRAFQVFAHPELLNAMRCRAMAAPFNWHQAVEPYADLYRDLLKKNVSVSSNY</sequence>
<comment type="function">
    <text evidence="1">Synthesizes alpha-1,4-glucan chains using ADP-glucose.</text>
</comment>
<comment type="catalytic activity">
    <reaction evidence="1">
        <text>[(1-&gt;4)-alpha-D-glucosyl](n) + ADP-alpha-D-glucose = [(1-&gt;4)-alpha-D-glucosyl](n+1) + ADP + H(+)</text>
        <dbReference type="Rhea" id="RHEA:18189"/>
        <dbReference type="Rhea" id="RHEA-COMP:9584"/>
        <dbReference type="Rhea" id="RHEA-COMP:9587"/>
        <dbReference type="ChEBI" id="CHEBI:15378"/>
        <dbReference type="ChEBI" id="CHEBI:15444"/>
        <dbReference type="ChEBI" id="CHEBI:57498"/>
        <dbReference type="ChEBI" id="CHEBI:456216"/>
        <dbReference type="EC" id="2.4.1.21"/>
    </reaction>
</comment>
<comment type="pathway">
    <text evidence="1">Glycan biosynthesis; glycogen biosynthesis.</text>
</comment>
<comment type="similarity">
    <text evidence="1">Belongs to the glycosyltransferase 1 family. Bacterial/plant glycogen synthase subfamily.</text>
</comment>
<comment type="sequence caution" evidence="2">
    <conflict type="erroneous initiation">
        <sequence resource="EMBL-CDS" id="AAY38026"/>
    </conflict>
</comment>
<reference key="1">
    <citation type="journal article" date="2005" name="Proc. Natl. Acad. Sci. U.S.A.">
        <title>Comparison of the complete genome sequences of Pseudomonas syringae pv. syringae B728a and pv. tomato DC3000.</title>
        <authorList>
            <person name="Feil H."/>
            <person name="Feil W.S."/>
            <person name="Chain P."/>
            <person name="Larimer F."/>
            <person name="Dibartolo G."/>
            <person name="Copeland A."/>
            <person name="Lykidis A."/>
            <person name="Trong S."/>
            <person name="Nolan M."/>
            <person name="Goltsman E."/>
            <person name="Thiel J."/>
            <person name="Malfatti S."/>
            <person name="Loper J.E."/>
            <person name="Lapidus A."/>
            <person name="Detter J.C."/>
            <person name="Land M."/>
            <person name="Richardson P.M."/>
            <person name="Kyrpides N.C."/>
            <person name="Ivanova N."/>
            <person name="Lindow S.E."/>
        </authorList>
    </citation>
    <scope>NUCLEOTIDE SEQUENCE [LARGE SCALE GENOMIC DNA]</scope>
    <source>
        <strain>B728a</strain>
    </source>
</reference>
<evidence type="ECO:0000255" key="1">
    <source>
        <dbReference type="HAMAP-Rule" id="MF_00484"/>
    </source>
</evidence>
<evidence type="ECO:0000305" key="2"/>